<gene>
    <name evidence="1" type="primary">panC</name>
    <name type="ordered locus">jhp_0006</name>
</gene>
<feature type="chain" id="PRO_0000128236" description="Pantothenate synthetase">
    <location>
        <begin position="1"/>
        <end position="276"/>
    </location>
</feature>
<feature type="active site" description="Proton donor" evidence="1">
    <location>
        <position position="34"/>
    </location>
</feature>
<feature type="binding site" evidence="1">
    <location>
        <begin position="27"/>
        <end position="34"/>
    </location>
    <ligand>
        <name>ATP</name>
        <dbReference type="ChEBI" id="CHEBI:30616"/>
    </ligand>
</feature>
<feature type="binding site" evidence="1">
    <location>
        <position position="58"/>
    </location>
    <ligand>
        <name>(R)-pantoate</name>
        <dbReference type="ChEBI" id="CHEBI:15980"/>
    </ligand>
</feature>
<feature type="binding site" evidence="1">
    <location>
        <position position="58"/>
    </location>
    <ligand>
        <name>beta-alanine</name>
        <dbReference type="ChEBI" id="CHEBI:57966"/>
    </ligand>
</feature>
<feature type="binding site" evidence="1">
    <location>
        <begin position="147"/>
        <end position="150"/>
    </location>
    <ligand>
        <name>ATP</name>
        <dbReference type="ChEBI" id="CHEBI:30616"/>
    </ligand>
</feature>
<feature type="binding site" evidence="1">
    <location>
        <position position="153"/>
    </location>
    <ligand>
        <name>(R)-pantoate</name>
        <dbReference type="ChEBI" id="CHEBI:15980"/>
    </ligand>
</feature>
<feature type="binding site" evidence="1">
    <location>
        <position position="176"/>
    </location>
    <ligand>
        <name>ATP</name>
        <dbReference type="ChEBI" id="CHEBI:30616"/>
    </ligand>
</feature>
<feature type="binding site" evidence="1">
    <location>
        <begin position="184"/>
        <end position="187"/>
    </location>
    <ligand>
        <name>ATP</name>
        <dbReference type="ChEBI" id="CHEBI:30616"/>
    </ligand>
</feature>
<sequence>MRALETIATLREYRKSLKESVGFVPTMGALHRGHQSLIERSLKENSHTIVSVFVNPTQFGANEDFSAYPRPLEKDLALCEKSGVNAVFAPKIGEMYPYEAKQRLKLYAPAFLSHSLEGAVRKGHFDGVVQVVLRLFHLTNPTRAYFGKKDAQQLLIIQHLVQDLLLDIEIAPCEIVRDSDNLALSSRNVCLNATERKQALAIPKALEKIQQAIDRGEKACEKLKKLGLEILKNLEVDYLECCNHKLEPLKTIEPANTLVLVAARVGKTRLLDNLWV</sequence>
<keyword id="KW-0067">ATP-binding</keyword>
<keyword id="KW-0963">Cytoplasm</keyword>
<keyword id="KW-0436">Ligase</keyword>
<keyword id="KW-0547">Nucleotide-binding</keyword>
<keyword id="KW-0566">Pantothenate biosynthesis</keyword>
<organism>
    <name type="scientific">Helicobacter pylori (strain J99 / ATCC 700824)</name>
    <name type="common">Campylobacter pylori J99</name>
    <dbReference type="NCBI Taxonomy" id="85963"/>
    <lineage>
        <taxon>Bacteria</taxon>
        <taxon>Pseudomonadati</taxon>
        <taxon>Campylobacterota</taxon>
        <taxon>Epsilonproteobacteria</taxon>
        <taxon>Campylobacterales</taxon>
        <taxon>Helicobacteraceae</taxon>
        <taxon>Helicobacter</taxon>
    </lineage>
</organism>
<comment type="function">
    <text evidence="1">Catalyzes the condensation of pantoate with beta-alanine in an ATP-dependent reaction via a pantoyl-adenylate intermediate.</text>
</comment>
<comment type="catalytic activity">
    <reaction evidence="1">
        <text>(R)-pantoate + beta-alanine + ATP = (R)-pantothenate + AMP + diphosphate + H(+)</text>
        <dbReference type="Rhea" id="RHEA:10912"/>
        <dbReference type="ChEBI" id="CHEBI:15378"/>
        <dbReference type="ChEBI" id="CHEBI:15980"/>
        <dbReference type="ChEBI" id="CHEBI:29032"/>
        <dbReference type="ChEBI" id="CHEBI:30616"/>
        <dbReference type="ChEBI" id="CHEBI:33019"/>
        <dbReference type="ChEBI" id="CHEBI:57966"/>
        <dbReference type="ChEBI" id="CHEBI:456215"/>
        <dbReference type="EC" id="6.3.2.1"/>
    </reaction>
</comment>
<comment type="pathway">
    <text evidence="1">Cofactor biosynthesis; (R)-pantothenate biosynthesis; (R)-pantothenate from (R)-pantoate and beta-alanine: step 1/1.</text>
</comment>
<comment type="subunit">
    <text evidence="1">Homodimer.</text>
</comment>
<comment type="subcellular location">
    <subcellularLocation>
        <location evidence="1">Cytoplasm</location>
    </subcellularLocation>
</comment>
<comment type="miscellaneous">
    <text evidence="1">The reaction proceeds by a bi uni uni bi ping pong mechanism.</text>
</comment>
<comment type="similarity">
    <text evidence="1">Belongs to the pantothenate synthetase family.</text>
</comment>
<reference key="1">
    <citation type="journal article" date="1999" name="Nature">
        <title>Genomic sequence comparison of two unrelated isolates of the human gastric pathogen Helicobacter pylori.</title>
        <authorList>
            <person name="Alm R.A."/>
            <person name="Ling L.-S.L."/>
            <person name="Moir D.T."/>
            <person name="King B.L."/>
            <person name="Brown E.D."/>
            <person name="Doig P.C."/>
            <person name="Smith D.R."/>
            <person name="Noonan B."/>
            <person name="Guild B.C."/>
            <person name="deJonge B.L."/>
            <person name="Carmel G."/>
            <person name="Tummino P.J."/>
            <person name="Caruso A."/>
            <person name="Uria-Nickelsen M."/>
            <person name="Mills D.M."/>
            <person name="Ives C."/>
            <person name="Gibson R."/>
            <person name="Merberg D."/>
            <person name="Mills S.D."/>
            <person name="Jiang Q."/>
            <person name="Taylor D.E."/>
            <person name="Vovis G.F."/>
            <person name="Trust T.J."/>
        </authorList>
    </citation>
    <scope>NUCLEOTIDE SEQUENCE [LARGE SCALE GENOMIC DNA]</scope>
    <source>
        <strain>J99 / ATCC 700824</strain>
    </source>
</reference>
<protein>
    <recommendedName>
        <fullName evidence="1">Pantothenate synthetase</fullName>
        <shortName evidence="1">PS</shortName>
        <ecNumber evidence="1">6.3.2.1</ecNumber>
    </recommendedName>
    <alternativeName>
        <fullName evidence="1">Pantoate--beta-alanine ligase</fullName>
    </alternativeName>
    <alternativeName>
        <fullName evidence="1">Pantoate-activating enzyme</fullName>
    </alternativeName>
</protein>
<dbReference type="EC" id="6.3.2.1" evidence="1"/>
<dbReference type="EMBL" id="AE001439">
    <property type="protein sequence ID" value="AAD05590.1"/>
    <property type="molecule type" value="Genomic_DNA"/>
</dbReference>
<dbReference type="PIR" id="H71985">
    <property type="entry name" value="H71985"/>
</dbReference>
<dbReference type="RefSeq" id="WP_001201972.1">
    <property type="nucleotide sequence ID" value="NC_000921.1"/>
</dbReference>
<dbReference type="SMR" id="Q9ZN52"/>
<dbReference type="KEGG" id="hpj:jhp_0006"/>
<dbReference type="eggNOG" id="COG0414">
    <property type="taxonomic scope" value="Bacteria"/>
</dbReference>
<dbReference type="UniPathway" id="UPA00028">
    <property type="reaction ID" value="UER00005"/>
</dbReference>
<dbReference type="Proteomes" id="UP000000804">
    <property type="component" value="Chromosome"/>
</dbReference>
<dbReference type="GO" id="GO:0005829">
    <property type="term" value="C:cytosol"/>
    <property type="evidence" value="ECO:0007669"/>
    <property type="project" value="TreeGrafter"/>
</dbReference>
<dbReference type="GO" id="GO:0005524">
    <property type="term" value="F:ATP binding"/>
    <property type="evidence" value="ECO:0007669"/>
    <property type="project" value="UniProtKB-KW"/>
</dbReference>
<dbReference type="GO" id="GO:0004592">
    <property type="term" value="F:pantoate-beta-alanine ligase activity"/>
    <property type="evidence" value="ECO:0007669"/>
    <property type="project" value="UniProtKB-UniRule"/>
</dbReference>
<dbReference type="GO" id="GO:0015940">
    <property type="term" value="P:pantothenate biosynthetic process"/>
    <property type="evidence" value="ECO:0007669"/>
    <property type="project" value="UniProtKB-UniRule"/>
</dbReference>
<dbReference type="CDD" id="cd00560">
    <property type="entry name" value="PanC"/>
    <property type="match status" value="1"/>
</dbReference>
<dbReference type="FunFam" id="3.40.50.620:FF:000114">
    <property type="entry name" value="Pantothenate synthetase"/>
    <property type="match status" value="1"/>
</dbReference>
<dbReference type="Gene3D" id="3.40.50.620">
    <property type="entry name" value="HUPs"/>
    <property type="match status" value="1"/>
</dbReference>
<dbReference type="Gene3D" id="3.30.1300.10">
    <property type="entry name" value="Pantoate-beta-alanine ligase, C-terminal domain"/>
    <property type="match status" value="1"/>
</dbReference>
<dbReference type="HAMAP" id="MF_00158">
    <property type="entry name" value="PanC"/>
    <property type="match status" value="1"/>
</dbReference>
<dbReference type="InterPro" id="IPR004821">
    <property type="entry name" value="Cyt_trans-like"/>
</dbReference>
<dbReference type="InterPro" id="IPR003721">
    <property type="entry name" value="Pantoate_ligase"/>
</dbReference>
<dbReference type="InterPro" id="IPR042176">
    <property type="entry name" value="Pantoate_ligase_C"/>
</dbReference>
<dbReference type="InterPro" id="IPR014729">
    <property type="entry name" value="Rossmann-like_a/b/a_fold"/>
</dbReference>
<dbReference type="NCBIfam" id="TIGR00125">
    <property type="entry name" value="cyt_tran_rel"/>
    <property type="match status" value="1"/>
</dbReference>
<dbReference type="NCBIfam" id="TIGR00018">
    <property type="entry name" value="panC"/>
    <property type="match status" value="1"/>
</dbReference>
<dbReference type="PANTHER" id="PTHR21299">
    <property type="entry name" value="CYTIDYLATE KINASE/PANTOATE-BETA-ALANINE LIGASE"/>
    <property type="match status" value="1"/>
</dbReference>
<dbReference type="PANTHER" id="PTHR21299:SF1">
    <property type="entry name" value="PANTOATE--BETA-ALANINE LIGASE"/>
    <property type="match status" value="1"/>
</dbReference>
<dbReference type="Pfam" id="PF02569">
    <property type="entry name" value="Pantoate_ligase"/>
    <property type="match status" value="1"/>
</dbReference>
<dbReference type="SUPFAM" id="SSF52374">
    <property type="entry name" value="Nucleotidylyl transferase"/>
    <property type="match status" value="1"/>
</dbReference>
<evidence type="ECO:0000255" key="1">
    <source>
        <dbReference type="HAMAP-Rule" id="MF_00158"/>
    </source>
</evidence>
<name>PANC_HELPJ</name>
<accession>Q9ZN52</accession>
<proteinExistence type="inferred from homology"/>